<name>RL21_ACIC1</name>
<protein>
    <recommendedName>
        <fullName evidence="1">Large ribosomal subunit protein bL21</fullName>
    </recommendedName>
    <alternativeName>
        <fullName evidence="3">50S ribosomal protein L21</fullName>
    </alternativeName>
</protein>
<accession>A0LSW9</accession>
<keyword id="KW-1185">Reference proteome</keyword>
<keyword id="KW-0687">Ribonucleoprotein</keyword>
<keyword id="KW-0689">Ribosomal protein</keyword>
<keyword id="KW-0694">RNA-binding</keyword>
<keyword id="KW-0699">rRNA-binding</keyword>
<evidence type="ECO:0000255" key="1">
    <source>
        <dbReference type="HAMAP-Rule" id="MF_01363"/>
    </source>
</evidence>
<evidence type="ECO:0000256" key="2">
    <source>
        <dbReference type="SAM" id="MobiDB-lite"/>
    </source>
</evidence>
<evidence type="ECO:0000305" key="3"/>
<reference key="1">
    <citation type="journal article" date="2009" name="Genome Res.">
        <title>Complete genome of the cellulolytic thermophile Acidothermus cellulolyticus 11B provides insights into its ecophysiological and evolutionary adaptations.</title>
        <authorList>
            <person name="Barabote R.D."/>
            <person name="Xie G."/>
            <person name="Leu D.H."/>
            <person name="Normand P."/>
            <person name="Necsulea A."/>
            <person name="Daubin V."/>
            <person name="Medigue C."/>
            <person name="Adney W.S."/>
            <person name="Xu X.C."/>
            <person name="Lapidus A."/>
            <person name="Parales R.E."/>
            <person name="Detter C."/>
            <person name="Pujic P."/>
            <person name="Bruce D."/>
            <person name="Lavire C."/>
            <person name="Challacombe J.F."/>
            <person name="Brettin T.S."/>
            <person name="Berry A.M."/>
        </authorList>
    </citation>
    <scope>NUCLEOTIDE SEQUENCE [LARGE SCALE GENOMIC DNA]</scope>
    <source>
        <strain>ATCC 43068 / DSM 8971 / 11B</strain>
    </source>
</reference>
<feature type="chain" id="PRO_1000067791" description="Large ribosomal subunit protein bL21">
    <location>
        <begin position="1"/>
        <end position="136"/>
    </location>
</feature>
<feature type="region of interest" description="Disordered" evidence="2">
    <location>
        <begin position="107"/>
        <end position="136"/>
    </location>
</feature>
<feature type="compositionally biased region" description="Low complexity" evidence="2">
    <location>
        <begin position="121"/>
        <end position="136"/>
    </location>
</feature>
<comment type="function">
    <text evidence="1">This protein binds to 23S rRNA in the presence of protein L20.</text>
</comment>
<comment type="subunit">
    <text evidence="1">Part of the 50S ribosomal subunit. Contacts protein L20.</text>
</comment>
<comment type="similarity">
    <text evidence="1">Belongs to the bacterial ribosomal protein bL21 family.</text>
</comment>
<dbReference type="EMBL" id="CP000481">
    <property type="protein sequence ID" value="ABK52529.1"/>
    <property type="molecule type" value="Genomic_DNA"/>
</dbReference>
<dbReference type="SMR" id="A0LSW9"/>
<dbReference type="FunCoup" id="A0LSW9">
    <property type="interactions" value="91"/>
</dbReference>
<dbReference type="STRING" id="351607.Acel_0756"/>
<dbReference type="KEGG" id="ace:Acel_0756"/>
<dbReference type="eggNOG" id="COG0261">
    <property type="taxonomic scope" value="Bacteria"/>
</dbReference>
<dbReference type="HOGENOM" id="CLU_061463_1_2_11"/>
<dbReference type="InParanoid" id="A0LSW9"/>
<dbReference type="OrthoDB" id="9813334at2"/>
<dbReference type="Proteomes" id="UP000008221">
    <property type="component" value="Chromosome"/>
</dbReference>
<dbReference type="GO" id="GO:0005737">
    <property type="term" value="C:cytoplasm"/>
    <property type="evidence" value="ECO:0007669"/>
    <property type="project" value="UniProtKB-ARBA"/>
</dbReference>
<dbReference type="GO" id="GO:1990904">
    <property type="term" value="C:ribonucleoprotein complex"/>
    <property type="evidence" value="ECO:0007669"/>
    <property type="project" value="UniProtKB-KW"/>
</dbReference>
<dbReference type="GO" id="GO:0005840">
    <property type="term" value="C:ribosome"/>
    <property type="evidence" value="ECO:0007669"/>
    <property type="project" value="UniProtKB-KW"/>
</dbReference>
<dbReference type="GO" id="GO:0019843">
    <property type="term" value="F:rRNA binding"/>
    <property type="evidence" value="ECO:0007669"/>
    <property type="project" value="UniProtKB-UniRule"/>
</dbReference>
<dbReference type="GO" id="GO:0003735">
    <property type="term" value="F:structural constituent of ribosome"/>
    <property type="evidence" value="ECO:0007669"/>
    <property type="project" value="InterPro"/>
</dbReference>
<dbReference type="GO" id="GO:0006412">
    <property type="term" value="P:translation"/>
    <property type="evidence" value="ECO:0007669"/>
    <property type="project" value="UniProtKB-UniRule"/>
</dbReference>
<dbReference type="HAMAP" id="MF_01363">
    <property type="entry name" value="Ribosomal_bL21"/>
    <property type="match status" value="1"/>
</dbReference>
<dbReference type="InterPro" id="IPR028909">
    <property type="entry name" value="bL21-like"/>
</dbReference>
<dbReference type="InterPro" id="IPR036164">
    <property type="entry name" value="bL21-like_sf"/>
</dbReference>
<dbReference type="InterPro" id="IPR001787">
    <property type="entry name" value="Ribosomal_bL21"/>
</dbReference>
<dbReference type="NCBIfam" id="TIGR00061">
    <property type="entry name" value="L21"/>
    <property type="match status" value="1"/>
</dbReference>
<dbReference type="PANTHER" id="PTHR21349">
    <property type="entry name" value="50S RIBOSOMAL PROTEIN L21"/>
    <property type="match status" value="1"/>
</dbReference>
<dbReference type="PANTHER" id="PTHR21349:SF0">
    <property type="entry name" value="LARGE RIBOSOMAL SUBUNIT PROTEIN BL21M"/>
    <property type="match status" value="1"/>
</dbReference>
<dbReference type="Pfam" id="PF00829">
    <property type="entry name" value="Ribosomal_L21p"/>
    <property type="match status" value="1"/>
</dbReference>
<dbReference type="SUPFAM" id="SSF141091">
    <property type="entry name" value="L21p-like"/>
    <property type="match status" value="1"/>
</dbReference>
<sequence>MYAIVRGGGRQHRVAVGDVIEINAAAKGATATVGATVELPAVLVVDGPSVTTGATALADITVTGEVVGHAKGPKIRILKYKNKTGYRRRVGHRQPLALVKVTHIGPRAAADRKTAPKRASAKAAADQTTAAQATAE</sequence>
<gene>
    <name evidence="1" type="primary">rplU</name>
    <name type="ordered locus">Acel_0756</name>
</gene>
<organism>
    <name type="scientific">Acidothermus cellulolyticus (strain ATCC 43068 / DSM 8971 / 11B)</name>
    <dbReference type="NCBI Taxonomy" id="351607"/>
    <lineage>
        <taxon>Bacteria</taxon>
        <taxon>Bacillati</taxon>
        <taxon>Actinomycetota</taxon>
        <taxon>Actinomycetes</taxon>
        <taxon>Acidothermales</taxon>
        <taxon>Acidothermaceae</taxon>
        <taxon>Acidothermus</taxon>
    </lineage>
</organism>
<proteinExistence type="inferred from homology"/>